<reference key="1">
    <citation type="journal article" date="2004" name="Genome Res.">
        <title>The status, quality, and expansion of the NIH full-length cDNA project: the Mammalian Gene Collection (MGC).</title>
        <authorList>
            <consortium name="The MGC Project Team"/>
        </authorList>
    </citation>
    <scope>NUCLEOTIDE SEQUENCE [LARGE SCALE MRNA]</scope>
    <source>
        <tissue>Testis</tissue>
    </source>
</reference>
<reference key="2">
    <citation type="journal article" date="1992" name="Biochim. Biophys. Acta">
        <title>Molecular cloning of dihydrolipoamide acetyltransferase of the rat pyruvate dehydrogenase complex: sequence comparison and evolutionary relationship to other dihydrolipoamide acyltransferases.</title>
        <authorList>
            <person name="Matuda S."/>
            <person name="Nakano K."/>
            <person name="Ohta S."/>
            <person name="Shimura M."/>
            <person name="Yamanaka T."/>
            <person name="Nakagawa S."/>
            <person name="Titani K."/>
            <person name="Miyata T."/>
        </authorList>
    </citation>
    <scope>NUCLEOTIDE SEQUENCE [MRNA] OF 92-632</scope>
    <scope>PROTEIN SEQUENCE OF 78-91</scope>
    <source>
        <tissue>Heart</tissue>
    </source>
</reference>
<reference key="3">
    <citation type="journal article" date="1987" name="J. Immunol.">
        <title>Identification and specificity of a cDNA encoding the 70 kd mitochondrial antigen recognized in primary biliary cirrhosis.</title>
        <authorList>
            <person name="Gershwin M.E."/>
            <person name="McKay I.R."/>
            <person name="Sturgess A."/>
            <person name="Coppel R.L."/>
        </authorList>
    </citation>
    <scope>NUCLEOTIDE SEQUENCE [MRNA] OF 163-632</scope>
    <scope>SUBCELLULAR LOCATION</scope>
    <source>
        <tissue>Liver</tissue>
    </source>
</reference>
<reference key="4">
    <citation type="submission" date="2007-04" db="UniProtKB">
        <authorList>
            <person name="Lubec G."/>
            <person name="Chen W.-Q."/>
        </authorList>
    </citation>
    <scope>PROTEIN SEQUENCE OF 397-414</scope>
    <scope>IDENTIFICATION BY MASS SPECTROMETRY</scope>
    <source>
        <strain>Sprague-Dawley</strain>
        <tissue>Hippocampus</tissue>
    </source>
</reference>
<reference key="5">
    <citation type="journal article" date="2009" name="Reproduction">
        <title>Identification of novel immunodominant epididymal sperm proteins using combinatorial approach.</title>
        <authorList>
            <person name="Khan S.A."/>
            <person name="Suryawanshi A.R."/>
            <person name="Ranpura S.A."/>
            <person name="Jadhav S.V."/>
            <person name="Khole V.V."/>
        </authorList>
    </citation>
    <scope>IDENTIFICATION BY MASS SPECTROMETRY</scope>
    <scope>TISSUE SPECIFICITY</scope>
</reference>
<comment type="function">
    <text evidence="2">As part of the pyruvate dehydrogenase complex, catalyzes the transfers of an acetyl group to a lipoic acid moiety. The pyruvate dehydrogenase complex, catalyzes the overall conversion of pyruvate to acetyl-CoA and CO(2), and thereby links cytoplasmic glycolysis and the mitochondrial tricarboxylic acid (TCA) cycle.</text>
</comment>
<comment type="catalytic activity">
    <reaction evidence="2">
        <text>N(6)-[(R)-dihydrolipoyl]-L-lysyl-[protein] + acetyl-CoA = N(6)-[(R)-S(8)-acetyldihydrolipoyl]-L-lysyl-[protein] + CoA</text>
        <dbReference type="Rhea" id="RHEA:17017"/>
        <dbReference type="Rhea" id="RHEA-COMP:10475"/>
        <dbReference type="Rhea" id="RHEA-COMP:10478"/>
        <dbReference type="ChEBI" id="CHEBI:57287"/>
        <dbReference type="ChEBI" id="CHEBI:57288"/>
        <dbReference type="ChEBI" id="CHEBI:83100"/>
        <dbReference type="ChEBI" id="CHEBI:83111"/>
        <dbReference type="EC" id="2.3.1.12"/>
    </reaction>
    <physiologicalReaction direction="left-to-right" evidence="2">
        <dbReference type="Rhea" id="RHEA:17018"/>
    </physiologicalReaction>
</comment>
<comment type="cofactor">
    <cofactor evidence="1">
        <name>(R)-lipoate</name>
        <dbReference type="ChEBI" id="CHEBI:83088"/>
    </cofactor>
    <text evidence="1">Binds 2 lipoyl cofactors covalently.</text>
</comment>
<comment type="subunit">
    <text evidence="1 2">Part of the pyruvate dehydrogenase complex (PDHc) that is a multi-enzyme complex composed of multiple copies of three enzymes, pyruvate dehydrogenase (subunits PDH1A and PDHB, E1 component), dihydrolipoamide acetyltransferase (DLAT, E2 component), and dihydrolipoamide dehydrogenase (DLD, E3 component) to which is added an additional protein the E3-binding protein (PDHX, E3BP) (By similarity). In terms of structural architecture, the E2 and E3BP components assemble into a 60meric central core with icosahedral symmetry (By similarity). The central core is decorated with E1 and E3 proteins (By similarity). Currently, two alternative models for the E2:E3BP stoichiometry are considered as being either 48:12 (E2(48)-E3BP(12)) or 40:20 (E2(40)-E3BP(20)). Interacts with PDK2 and PDK3. Interacts with SIRT4. Interacts with PDHB (By similarity).</text>
</comment>
<comment type="subcellular location">
    <subcellularLocation>
        <location evidence="12">Mitochondrion matrix</location>
    </subcellularLocation>
</comment>
<comment type="tissue specificity">
    <text evidence="9">Expressed in flagella of epididymal sperm.</text>
</comment>
<comment type="PTM">
    <text evidence="1">Delipoylated at Lys-123 and Lys-249 by SIRT4, delipoylation decreases the PHD complex activity.</text>
</comment>
<comment type="similarity">
    <text evidence="10">Belongs to the 2-oxoacid dehydrogenase family.</text>
</comment>
<accession>P08461</accession>
<accession>Q3B7V7</accession>
<proteinExistence type="evidence at protein level"/>
<dbReference type="EC" id="2.3.1.12" evidence="2"/>
<dbReference type="EMBL" id="BC107440">
    <property type="protein sequence ID" value="AAI07441.1"/>
    <property type="molecule type" value="mRNA"/>
</dbReference>
<dbReference type="EMBL" id="D10655">
    <property type="protein sequence ID" value="BAA01504.1"/>
    <property type="molecule type" value="mRNA"/>
</dbReference>
<dbReference type="EMBL" id="D00092">
    <property type="protein sequence ID" value="BAA20956.1"/>
    <property type="molecule type" value="mRNA"/>
</dbReference>
<dbReference type="EMBL" id="M16075">
    <property type="protein sequence ID" value="AAA41813.1"/>
    <property type="molecule type" value="mRNA"/>
</dbReference>
<dbReference type="PIR" id="S21766">
    <property type="entry name" value="S21766"/>
</dbReference>
<dbReference type="RefSeq" id="NP_112287.1">
    <property type="nucleotide sequence ID" value="NM_031025.1"/>
</dbReference>
<dbReference type="EMDB" id="EMD-16672"/>
<dbReference type="SMR" id="P08461"/>
<dbReference type="BioGRID" id="249554">
    <property type="interactions" value="4"/>
</dbReference>
<dbReference type="FunCoup" id="P08461">
    <property type="interactions" value="3031"/>
</dbReference>
<dbReference type="IntAct" id="P08461">
    <property type="interactions" value="5"/>
</dbReference>
<dbReference type="MINT" id="P08461"/>
<dbReference type="STRING" id="10116.ENSRNOP00000032890"/>
<dbReference type="GlyGen" id="P08461">
    <property type="glycosylation" value="4 sites, 1 O-linked glycan (2 sites)"/>
</dbReference>
<dbReference type="iPTMnet" id="P08461"/>
<dbReference type="PhosphoSitePlus" id="P08461"/>
<dbReference type="SwissPalm" id="P08461"/>
<dbReference type="jPOST" id="P08461"/>
<dbReference type="PaxDb" id="10116-ENSRNOP00000032890"/>
<dbReference type="Ensembl" id="ENSRNOT00000032152.5">
    <property type="protein sequence ID" value="ENSRNOP00000032890.4"/>
    <property type="gene ID" value="ENSRNOG00000009994.6"/>
</dbReference>
<dbReference type="GeneID" id="81654"/>
<dbReference type="KEGG" id="rno:81654"/>
<dbReference type="UCSC" id="RGD:619859">
    <property type="organism name" value="rat"/>
</dbReference>
<dbReference type="AGR" id="RGD:619859"/>
<dbReference type="CTD" id="1737"/>
<dbReference type="RGD" id="619859">
    <property type="gene designation" value="Dlat"/>
</dbReference>
<dbReference type="eggNOG" id="KOG0557">
    <property type="taxonomic scope" value="Eukaryota"/>
</dbReference>
<dbReference type="GeneTree" id="ENSGT00940000154943"/>
<dbReference type="HOGENOM" id="CLU_016733_10_2_1"/>
<dbReference type="InParanoid" id="P08461"/>
<dbReference type="OMA" id="TMEFESF"/>
<dbReference type="OrthoDB" id="537444at2759"/>
<dbReference type="PhylomeDB" id="P08461"/>
<dbReference type="TreeFam" id="TF106145"/>
<dbReference type="Reactome" id="R-RNO-204174">
    <property type="pathway name" value="Regulation of pyruvate dehydrogenase (PDH) complex"/>
</dbReference>
<dbReference type="Reactome" id="R-RNO-5362517">
    <property type="pathway name" value="Signaling by Retinoic Acid"/>
</dbReference>
<dbReference type="Reactome" id="R-RNO-9857492">
    <property type="pathway name" value="Protein lipoylation"/>
</dbReference>
<dbReference type="Reactome" id="R-RNO-9861559">
    <property type="pathway name" value="PDH complex synthesizes acetyl-CoA from PYR"/>
</dbReference>
<dbReference type="PRO" id="PR:P08461"/>
<dbReference type="Proteomes" id="UP000002494">
    <property type="component" value="Chromosome 8"/>
</dbReference>
<dbReference type="Bgee" id="ENSRNOG00000009994">
    <property type="expression patterns" value="Expressed in heart and 18 other cell types or tissues"/>
</dbReference>
<dbReference type="GO" id="GO:0005759">
    <property type="term" value="C:mitochondrial matrix"/>
    <property type="evidence" value="ECO:0000266"/>
    <property type="project" value="RGD"/>
</dbReference>
<dbReference type="GO" id="GO:0005739">
    <property type="term" value="C:mitochondrion"/>
    <property type="evidence" value="ECO:0000314"/>
    <property type="project" value="UniProtKB"/>
</dbReference>
<dbReference type="GO" id="GO:0045254">
    <property type="term" value="C:pyruvate dehydrogenase complex"/>
    <property type="evidence" value="ECO:0000314"/>
    <property type="project" value="RGD"/>
</dbReference>
<dbReference type="GO" id="GO:0016407">
    <property type="term" value="F:acetyltransferase activity"/>
    <property type="evidence" value="ECO:0000266"/>
    <property type="project" value="RGD"/>
</dbReference>
<dbReference type="GO" id="GO:0004742">
    <property type="term" value="F:dihydrolipoyllysine-residue acetyltransferase activity"/>
    <property type="evidence" value="ECO:0000314"/>
    <property type="project" value="RGD"/>
</dbReference>
<dbReference type="GO" id="GO:0042802">
    <property type="term" value="F:identical protein binding"/>
    <property type="evidence" value="ECO:0000266"/>
    <property type="project" value="RGD"/>
</dbReference>
<dbReference type="GO" id="GO:0000166">
    <property type="term" value="F:nucleotide binding"/>
    <property type="evidence" value="ECO:0000304"/>
    <property type="project" value="RGD"/>
</dbReference>
<dbReference type="GO" id="GO:0034604">
    <property type="term" value="F:pyruvate dehydrogenase (NAD+) activity"/>
    <property type="evidence" value="ECO:0007669"/>
    <property type="project" value="Ensembl"/>
</dbReference>
<dbReference type="GO" id="GO:0006006">
    <property type="term" value="P:glucose metabolic process"/>
    <property type="evidence" value="ECO:0007669"/>
    <property type="project" value="UniProtKB-KW"/>
</dbReference>
<dbReference type="GO" id="GO:0042867">
    <property type="term" value="P:pyruvate catabolic process"/>
    <property type="evidence" value="ECO:0000266"/>
    <property type="project" value="RGD"/>
</dbReference>
<dbReference type="GO" id="GO:0006086">
    <property type="term" value="P:pyruvate decarboxylation to acetyl-CoA"/>
    <property type="evidence" value="ECO:0000314"/>
    <property type="project" value="RGD"/>
</dbReference>
<dbReference type="GO" id="GO:0006099">
    <property type="term" value="P:tricarboxylic acid cycle"/>
    <property type="evidence" value="ECO:0000250"/>
    <property type="project" value="UniProtKB"/>
</dbReference>
<dbReference type="CDD" id="cd06849">
    <property type="entry name" value="lipoyl_domain"/>
    <property type="match status" value="2"/>
</dbReference>
<dbReference type="FunFam" id="2.40.50.100:FF:000010">
    <property type="entry name" value="Acetyltransferase component of pyruvate dehydrogenase complex"/>
    <property type="match status" value="2"/>
</dbReference>
<dbReference type="FunFam" id="3.30.559.10:FF:000003">
    <property type="entry name" value="Acetyltransferase component of pyruvate dehydrogenase complex"/>
    <property type="match status" value="1"/>
</dbReference>
<dbReference type="FunFam" id="4.10.320.10:FF:000005">
    <property type="entry name" value="Acetyltransferase component of pyruvate dehydrogenase complex"/>
    <property type="match status" value="1"/>
</dbReference>
<dbReference type="Gene3D" id="2.40.50.100">
    <property type="match status" value="2"/>
</dbReference>
<dbReference type="Gene3D" id="3.30.559.10">
    <property type="entry name" value="Chloramphenicol acetyltransferase-like domain"/>
    <property type="match status" value="1"/>
</dbReference>
<dbReference type="Gene3D" id="4.10.320.10">
    <property type="entry name" value="E3-binding domain"/>
    <property type="match status" value="1"/>
</dbReference>
<dbReference type="InterPro" id="IPR003016">
    <property type="entry name" value="2-oxoA_DH_lipoyl-BS"/>
</dbReference>
<dbReference type="InterPro" id="IPR001078">
    <property type="entry name" value="2-oxoacid_DH_actylTfrase"/>
</dbReference>
<dbReference type="InterPro" id="IPR000089">
    <property type="entry name" value="Biotin_lipoyl"/>
</dbReference>
<dbReference type="InterPro" id="IPR023213">
    <property type="entry name" value="CAT-like_dom_sf"/>
</dbReference>
<dbReference type="InterPro" id="IPR045257">
    <property type="entry name" value="E2/Pdx1"/>
</dbReference>
<dbReference type="InterPro" id="IPR036625">
    <property type="entry name" value="E3-bd_dom_sf"/>
</dbReference>
<dbReference type="InterPro" id="IPR006257">
    <property type="entry name" value="LAT1"/>
</dbReference>
<dbReference type="InterPro" id="IPR004167">
    <property type="entry name" value="PSBD"/>
</dbReference>
<dbReference type="InterPro" id="IPR011053">
    <property type="entry name" value="Single_hybrid_motif"/>
</dbReference>
<dbReference type="NCBIfam" id="TIGR01349">
    <property type="entry name" value="PDHac_trf_mito"/>
    <property type="match status" value="1"/>
</dbReference>
<dbReference type="PANTHER" id="PTHR23151">
    <property type="entry name" value="DIHYDROLIPOAMIDE ACETYL/SUCCINYL-TRANSFERASE-RELATED"/>
    <property type="match status" value="1"/>
</dbReference>
<dbReference type="PANTHER" id="PTHR23151:SF90">
    <property type="entry name" value="DIHYDROLIPOYLLYSINE-RESIDUE ACETYLTRANSFERASE COMPONENT OF PYRUVATE DEHYDROGENASE COMPLEX, MITOCHONDRIAL-RELATED"/>
    <property type="match status" value="1"/>
</dbReference>
<dbReference type="Pfam" id="PF00198">
    <property type="entry name" value="2-oxoacid_dh"/>
    <property type="match status" value="1"/>
</dbReference>
<dbReference type="Pfam" id="PF00364">
    <property type="entry name" value="Biotin_lipoyl"/>
    <property type="match status" value="2"/>
</dbReference>
<dbReference type="Pfam" id="PF02817">
    <property type="entry name" value="E3_binding"/>
    <property type="match status" value="1"/>
</dbReference>
<dbReference type="SUPFAM" id="SSF52777">
    <property type="entry name" value="CoA-dependent acyltransferases"/>
    <property type="match status" value="1"/>
</dbReference>
<dbReference type="SUPFAM" id="SSF47005">
    <property type="entry name" value="Peripheral subunit-binding domain of 2-oxo acid dehydrogenase complex"/>
    <property type="match status" value="1"/>
</dbReference>
<dbReference type="SUPFAM" id="SSF51230">
    <property type="entry name" value="Single hybrid motif"/>
    <property type="match status" value="2"/>
</dbReference>
<dbReference type="PROSITE" id="PS50968">
    <property type="entry name" value="BIOTINYL_LIPOYL"/>
    <property type="match status" value="2"/>
</dbReference>
<dbReference type="PROSITE" id="PS00189">
    <property type="entry name" value="LIPOYL"/>
    <property type="match status" value="2"/>
</dbReference>
<dbReference type="PROSITE" id="PS51826">
    <property type="entry name" value="PSBD"/>
    <property type="match status" value="1"/>
</dbReference>
<keyword id="KW-0007">Acetylation</keyword>
<keyword id="KW-0012">Acyltransferase</keyword>
<keyword id="KW-0119">Carbohydrate metabolism</keyword>
<keyword id="KW-0903">Direct protein sequencing</keyword>
<keyword id="KW-0313">Glucose metabolism</keyword>
<keyword id="KW-0450">Lipoyl</keyword>
<keyword id="KW-0496">Mitochondrion</keyword>
<keyword id="KW-0597">Phosphoprotein</keyword>
<keyword id="KW-1185">Reference proteome</keyword>
<keyword id="KW-0677">Repeat</keyword>
<keyword id="KW-0808">Transferase</keyword>
<keyword id="KW-0809">Transit peptide</keyword>
<keyword id="KW-0816">Tricarboxylic acid cycle</keyword>
<sequence length="632" mass="67166">MWRVCARRVQSAVPRAGFRARWATLKGPRTGPAAVRCGSGIPSYGVRSLCGWSYGSATVPRNRILQQLLGSPSRRSYSLPPHQKVPLPSLSPTMQAGTIARWEKKEGEKISEGDLIAEVETDKATVGFESLEECYMAKILVPEGTRDVPVGSIICITVEKPQDIEAFKNYTLDSATAATQAAPAPAAAPAAAPAAPSASAPGSSYPVHMQIVLPALSPTMTMGTVQRWEKKVGEKLSEGDLLAEIETDKATIGFEVQEEGYLAKILVPEGTRDVPLGTPLCIIVEKQEDIAAFADYRPTEVTSLKPQAPPPVPPPVAAVPPIPQPLAPTPSAAPAGPKGRVFVSPLAKKLAAEKGIDLTQVKGTGPEGRIIKKDIDSFVPTKAAPAAAAAAPPGPRVAPTPAGVFIDIPISNIRRVIAQRLMQSKQTIPHYYLSVDVNMGEVLLVRKELNKMLEGKGKISVNDFIIKASALACLKVPEANSSWMDTVIRQNHVVDVSVAVSTPAGLITPIVFNAHIKGLETIASDVVSLASKAREGKLQPHEFQGGTFTISNLGMFGIKNFSAIINPPQACILAIGASEDKLIPADNEKGFDVASVMSVTLSCDHRVVDGAVGAQWLAEFKKYLEKPVTMLL</sequence>
<protein>
    <recommendedName>
        <fullName evidence="10">Dihydrolipoyllysine-residue acetyltransferase component of pyruvate dehydrogenase complex, mitochondrial</fullName>
        <ecNumber evidence="2">2.3.1.12</ecNumber>
    </recommendedName>
    <alternativeName>
        <fullName evidence="12">70 kDa mitochondrial autoantigen of primary biliary cirrhosis</fullName>
        <shortName>PBC</shortName>
    </alternativeName>
    <alternativeName>
        <fullName evidence="11">Dihydrolipoamide acetyltransferase component of pyruvate dehydrogenase complex</fullName>
    </alternativeName>
    <alternativeName>
        <fullName>Pyruvate dehydrogenase complex component E2</fullName>
        <shortName evidence="1">PDC-E2</shortName>
        <shortName>PDCE2</shortName>
    </alternativeName>
</protein>
<gene>
    <name evidence="13" type="primary">Dlat</name>
</gene>
<organism>
    <name type="scientific">Rattus norvegicus</name>
    <name type="common">Rat</name>
    <dbReference type="NCBI Taxonomy" id="10116"/>
    <lineage>
        <taxon>Eukaryota</taxon>
        <taxon>Metazoa</taxon>
        <taxon>Chordata</taxon>
        <taxon>Craniata</taxon>
        <taxon>Vertebrata</taxon>
        <taxon>Euteleostomi</taxon>
        <taxon>Mammalia</taxon>
        <taxon>Eutheria</taxon>
        <taxon>Euarchontoglires</taxon>
        <taxon>Glires</taxon>
        <taxon>Rodentia</taxon>
        <taxon>Myomorpha</taxon>
        <taxon>Muroidea</taxon>
        <taxon>Muridae</taxon>
        <taxon>Murinae</taxon>
        <taxon>Rattus</taxon>
    </lineage>
</organism>
<name>ODP2_RAT</name>
<feature type="transit peptide" description="Mitochondrion" evidence="8">
    <location>
        <begin position="1"/>
        <end position="77"/>
    </location>
</feature>
<feature type="chain" id="PRO_0000162298" description="Dihydrolipoyllysine-residue acetyltransferase component of pyruvate dehydrogenase complex, mitochondrial">
    <location>
        <begin position="78"/>
        <end position="632"/>
    </location>
</feature>
<feature type="domain" description="Lipoyl-binding 1" evidence="6">
    <location>
        <begin position="82"/>
        <end position="158"/>
    </location>
</feature>
<feature type="domain" description="Lipoyl-binding 2" evidence="6">
    <location>
        <begin position="208"/>
        <end position="284"/>
    </location>
</feature>
<feature type="domain" description="Peripheral subunit-binding (PSBD)" evidence="7">
    <location>
        <begin position="342"/>
        <end position="379"/>
    </location>
</feature>
<feature type="active site" evidence="5">
    <location>
        <position position="605"/>
    </location>
</feature>
<feature type="active site" evidence="5">
    <location>
        <position position="609"/>
    </location>
</feature>
<feature type="binding site" evidence="3">
    <location>
        <position position="446"/>
    </location>
    <ligand>
        <name>CoA</name>
        <dbReference type="ChEBI" id="CHEBI:57287"/>
    </ligand>
</feature>
<feature type="binding site" evidence="3">
    <location>
        <position position="460"/>
    </location>
    <ligand>
        <name>CoA</name>
        <dbReference type="ChEBI" id="CHEBI:57287"/>
    </ligand>
</feature>
<feature type="binding site" evidence="3">
    <location>
        <position position="551"/>
    </location>
    <ligand>
        <name>CoA</name>
        <dbReference type="ChEBI" id="CHEBI:57287"/>
    </ligand>
</feature>
<feature type="binding site" evidence="3">
    <location>
        <position position="552"/>
    </location>
    <ligand>
        <name>CoA</name>
        <dbReference type="ChEBI" id="CHEBI:57287"/>
    </ligand>
</feature>
<feature type="binding site" evidence="3">
    <location>
        <position position="576"/>
    </location>
    <ligand>
        <name>CoA</name>
        <dbReference type="ChEBI" id="CHEBI:57287"/>
    </ligand>
</feature>
<feature type="modified residue" description="Phosphoserine" evidence="1">
    <location>
        <position position="91"/>
    </location>
</feature>
<feature type="modified residue" description="N6-lipoyllysine" evidence="6">
    <location>
        <position position="123"/>
    </location>
</feature>
<feature type="modified residue" description="N6-lipoyllysine" evidence="6">
    <location>
        <position position="249"/>
    </location>
</feature>
<feature type="modified residue" description="N6-acetyllysine" evidence="1">
    <location>
        <position position="451"/>
    </location>
</feature>
<feature type="modified residue" description="N6-succinyllysine" evidence="4">
    <location>
        <position position="458"/>
    </location>
</feature>
<feature type="modified residue" description="N6-succinyllysine" evidence="4">
    <location>
        <position position="532"/>
    </location>
</feature>
<feature type="sequence conflict" description="In Ref. 2; BAA01504." evidence="10" ref="2">
    <original>VGS</original>
    <variation>IGC</variation>
    <location>
        <begin position="150"/>
        <end position="152"/>
    </location>
</feature>
<feature type="sequence conflict" description="In Ref. 3; BAA20956/AAA41813." evidence="10" ref="3">
    <original>DI</original>
    <variation>GP</variation>
    <location>
        <begin position="163"/>
        <end position="164"/>
    </location>
</feature>
<feature type="sequence conflict" description="In Ref. 3; BAA20956." evidence="10" ref="3">
    <original>LSCDHRVVDGAVGAQWLAEFKKYLEKPVTMLL</original>
    <variation>HSAVIIELWMEQLEPSGLL</variation>
    <location>
        <begin position="601"/>
        <end position="632"/>
    </location>
</feature>
<evidence type="ECO:0000250" key="1">
    <source>
        <dbReference type="UniProtKB" id="P10515"/>
    </source>
</evidence>
<evidence type="ECO:0000250" key="2">
    <source>
        <dbReference type="UniProtKB" id="P11180"/>
    </source>
</evidence>
<evidence type="ECO:0000250" key="3">
    <source>
        <dbReference type="UniProtKB" id="P11181"/>
    </source>
</evidence>
<evidence type="ECO:0000250" key="4">
    <source>
        <dbReference type="UniProtKB" id="Q8BMF4"/>
    </source>
</evidence>
<evidence type="ECO:0000250" key="5">
    <source>
        <dbReference type="UniProtKB" id="Q9N0F1"/>
    </source>
</evidence>
<evidence type="ECO:0000255" key="6">
    <source>
        <dbReference type="PROSITE-ProRule" id="PRU01066"/>
    </source>
</evidence>
<evidence type="ECO:0000255" key="7">
    <source>
        <dbReference type="PROSITE-ProRule" id="PRU01170"/>
    </source>
</evidence>
<evidence type="ECO:0000269" key="8">
    <source>
    </source>
</evidence>
<evidence type="ECO:0000269" key="9">
    <source>
    </source>
</evidence>
<evidence type="ECO:0000305" key="10"/>
<evidence type="ECO:0000305" key="11">
    <source>
    </source>
</evidence>
<evidence type="ECO:0000305" key="12">
    <source>
    </source>
</evidence>
<evidence type="ECO:0000312" key="13">
    <source>
        <dbReference type="RGD" id="619859"/>
    </source>
</evidence>